<comment type="function">
    <text evidence="1">Catalyzes the addition of fucose in alpha 1-6 linkage to the first GlcNAc residue, next to the peptide chains in N-glycans.</text>
</comment>
<comment type="catalytic activity">
    <reaction>
        <text>N(4)-{beta-D-GlcNAc-(1-&gt;2)-alpha-D-Man-(1-&gt;3)-[beta-D-GlcNAc-(1-&gt;2)-alpha-D-Man-(1-&gt;6)]-beta-D-Man-(1-&gt;4)-beta-D-GlcNAc-(1-&gt;4)-beta-D-GlcNAc}-L-asparaginyl-[protein] + GDP-beta-L-fucose = an N(4)-{beta-D-GlcNAc-(1-&gt;2)-alpha-D-Man-(1-&gt;3)-[beta-D-GlcNAc-(1-&gt;2)-alpha-D-Man-(1-&gt;6)]-beta-D-Man-(1-&gt;4)-beta-D-GlcNAc-(1-&gt;4)-[alpha-L-Fuc-(1-&gt;6)]-beta-D-GlcNAc}-L-asparaginyl-[protein] + GDP + H(+)</text>
        <dbReference type="Rhea" id="RHEA:12985"/>
        <dbReference type="Rhea" id="RHEA-COMP:13526"/>
        <dbReference type="Rhea" id="RHEA-COMP:13532"/>
        <dbReference type="ChEBI" id="CHEBI:15378"/>
        <dbReference type="ChEBI" id="CHEBI:57273"/>
        <dbReference type="ChEBI" id="CHEBI:58189"/>
        <dbReference type="ChEBI" id="CHEBI:60651"/>
        <dbReference type="ChEBI" id="CHEBI:137207"/>
        <dbReference type="EC" id="2.4.1.68"/>
    </reaction>
</comment>
<comment type="pathway">
    <text>Protein modification; protein glycosylation.</text>
</comment>
<comment type="subcellular location">
    <subcellularLocation>
        <location evidence="1">Golgi apparatus</location>
        <location evidence="1">Golgi stack membrane</location>
        <topology evidence="1">Single-pass type II membrane protein</topology>
    </subcellularLocation>
    <text evidence="1">Membrane-bound form in trans cisternae of Golgi.</text>
</comment>
<comment type="PTM">
    <text evidence="2">Tyrosine phosphorylated by PKDCC/VLK.</text>
</comment>
<comment type="similarity">
    <text evidence="6">Belongs to the glycosyltransferase 23 family.</text>
</comment>
<reference key="1">
    <citation type="submission" date="2004-07" db="EMBL/GenBank/DDBJ databases">
        <title>Phylogeny of fucosyltransferases.</title>
        <authorList>
            <person name="Martinez-Duncker I."/>
            <person name="Oriol R."/>
            <person name="Mollicone R."/>
        </authorList>
    </citation>
    <scope>NUCLEOTIDE SEQUENCE [MRNA]</scope>
    <source>
        <strain>Wistar</strain>
    </source>
</reference>
<proteinExistence type="evidence at transcript level"/>
<organism>
    <name type="scientific">Rattus norvegicus</name>
    <name type="common">Rat</name>
    <dbReference type="NCBI Taxonomy" id="10116"/>
    <lineage>
        <taxon>Eukaryota</taxon>
        <taxon>Metazoa</taxon>
        <taxon>Chordata</taxon>
        <taxon>Craniata</taxon>
        <taxon>Vertebrata</taxon>
        <taxon>Euteleostomi</taxon>
        <taxon>Mammalia</taxon>
        <taxon>Eutheria</taxon>
        <taxon>Euarchontoglires</taxon>
        <taxon>Glires</taxon>
        <taxon>Rodentia</taxon>
        <taxon>Myomorpha</taxon>
        <taxon>Muroidea</taxon>
        <taxon>Muridae</taxon>
        <taxon>Murinae</taxon>
        <taxon>Rattus</taxon>
    </lineage>
</organism>
<dbReference type="EC" id="2.4.1.68"/>
<dbReference type="EMBL" id="AJ781406">
    <property type="protein sequence ID" value="CAH03674.1"/>
    <property type="molecule type" value="mRNA"/>
</dbReference>
<dbReference type="RefSeq" id="NP_001002289.1">
    <property type="nucleotide sequence ID" value="NM_001002289.1"/>
</dbReference>
<dbReference type="SMR" id="Q6EV76"/>
<dbReference type="FunCoup" id="Q6EV76">
    <property type="interactions" value="1245"/>
</dbReference>
<dbReference type="STRING" id="10116.ENSRNOP00000011220"/>
<dbReference type="CAZy" id="GT23">
    <property type="family name" value="Glycosyltransferase Family 23"/>
</dbReference>
<dbReference type="iPTMnet" id="Q6EV76"/>
<dbReference type="PhosphoSitePlus" id="Q6EV76"/>
<dbReference type="PaxDb" id="10116-ENSRNOP00000011220"/>
<dbReference type="GeneID" id="432392"/>
<dbReference type="KEGG" id="rno:432392"/>
<dbReference type="UCSC" id="RGD:1303096">
    <property type="organism name" value="rat"/>
</dbReference>
<dbReference type="AGR" id="RGD:1303096"/>
<dbReference type="CTD" id="2530"/>
<dbReference type="RGD" id="1303096">
    <property type="gene designation" value="Fut8"/>
</dbReference>
<dbReference type="eggNOG" id="KOG3705">
    <property type="taxonomic scope" value="Eukaryota"/>
</dbReference>
<dbReference type="InParanoid" id="Q6EV76"/>
<dbReference type="OrthoDB" id="2014825at2759"/>
<dbReference type="PhylomeDB" id="Q6EV76"/>
<dbReference type="Reactome" id="R-RNO-975578">
    <property type="pathway name" value="Reactions specific to the complex N-glycan synthesis pathway"/>
</dbReference>
<dbReference type="UniPathway" id="UPA00378"/>
<dbReference type="PRO" id="PR:Q6EV76"/>
<dbReference type="Proteomes" id="UP000002494">
    <property type="component" value="Unplaced"/>
</dbReference>
<dbReference type="GO" id="GO:0032580">
    <property type="term" value="C:Golgi cisterna membrane"/>
    <property type="evidence" value="ECO:0007669"/>
    <property type="project" value="UniProtKB-SubCell"/>
</dbReference>
<dbReference type="GO" id="GO:0046921">
    <property type="term" value="F:alpha-(1-&gt;6)-fucosyltransferase activity"/>
    <property type="evidence" value="ECO:0000266"/>
    <property type="project" value="RGD"/>
</dbReference>
<dbReference type="GO" id="GO:0008424">
    <property type="term" value="F:glycoprotein 6-alpha-L-fucosyltransferase activity"/>
    <property type="evidence" value="ECO:0000250"/>
    <property type="project" value="UniProtKB"/>
</dbReference>
<dbReference type="GO" id="GO:0016757">
    <property type="term" value="F:glycosyltransferase activity"/>
    <property type="evidence" value="ECO:0000266"/>
    <property type="project" value="RGD"/>
</dbReference>
<dbReference type="GO" id="GO:0017124">
    <property type="term" value="F:SH3 domain binding"/>
    <property type="evidence" value="ECO:0007669"/>
    <property type="project" value="UniProtKB-KW"/>
</dbReference>
<dbReference type="GO" id="GO:0016477">
    <property type="term" value="P:cell migration"/>
    <property type="evidence" value="ECO:0000266"/>
    <property type="project" value="RGD"/>
</dbReference>
<dbReference type="GO" id="GO:0010761">
    <property type="term" value="P:fibroblast migration"/>
    <property type="evidence" value="ECO:0000266"/>
    <property type="project" value="RGD"/>
</dbReference>
<dbReference type="GO" id="GO:0046368">
    <property type="term" value="P:GDP-L-fucose metabolic process"/>
    <property type="evidence" value="ECO:0000250"/>
    <property type="project" value="UniProtKB"/>
</dbReference>
<dbReference type="GO" id="GO:0007229">
    <property type="term" value="P:integrin-mediated signaling pathway"/>
    <property type="evidence" value="ECO:0000266"/>
    <property type="project" value="RGD"/>
</dbReference>
<dbReference type="GO" id="GO:0036071">
    <property type="term" value="P:N-glycan fucosylation"/>
    <property type="evidence" value="ECO:0000266"/>
    <property type="project" value="RGD"/>
</dbReference>
<dbReference type="GO" id="GO:0006491">
    <property type="term" value="P:N-glycan processing"/>
    <property type="evidence" value="ECO:0000266"/>
    <property type="project" value="RGD"/>
</dbReference>
<dbReference type="GO" id="GO:0006487">
    <property type="term" value="P:protein N-linked glycosylation"/>
    <property type="evidence" value="ECO:0000318"/>
    <property type="project" value="GO_Central"/>
</dbReference>
<dbReference type="GO" id="GO:0018279">
    <property type="term" value="P:protein N-linked glycosylation via asparagine"/>
    <property type="evidence" value="ECO:0000250"/>
    <property type="project" value="UniProtKB"/>
</dbReference>
<dbReference type="GO" id="GO:0043112">
    <property type="term" value="P:receptor metabolic process"/>
    <property type="evidence" value="ECO:0000266"/>
    <property type="project" value="RGD"/>
</dbReference>
<dbReference type="GO" id="GO:1900407">
    <property type="term" value="P:regulation of cellular response to oxidative stress"/>
    <property type="evidence" value="ECO:0000266"/>
    <property type="project" value="RGD"/>
</dbReference>
<dbReference type="GO" id="GO:0010468">
    <property type="term" value="P:regulation of gene expression"/>
    <property type="evidence" value="ECO:0000266"/>
    <property type="project" value="RGD"/>
</dbReference>
<dbReference type="GO" id="GO:0007585">
    <property type="term" value="P:respiratory gaseous exchange by respiratory system"/>
    <property type="evidence" value="ECO:0000266"/>
    <property type="project" value="RGD"/>
</dbReference>
<dbReference type="GO" id="GO:0007179">
    <property type="term" value="P:transforming growth factor beta receptor signaling pathway"/>
    <property type="evidence" value="ECO:0000266"/>
    <property type="project" value="RGD"/>
</dbReference>
<dbReference type="CDD" id="cd11300">
    <property type="entry name" value="Fut8_like"/>
    <property type="match status" value="1"/>
</dbReference>
<dbReference type="CDD" id="cd11792">
    <property type="entry name" value="SH3_Fut8"/>
    <property type="match status" value="1"/>
</dbReference>
<dbReference type="FunFam" id="1.10.287.1060:FF:000003">
    <property type="entry name" value="Alpha-(1,6)-fucosyltransferase"/>
    <property type="match status" value="1"/>
</dbReference>
<dbReference type="FunFam" id="2.30.30.40:FF:000070">
    <property type="entry name" value="Alpha-(1,6)-fucosyltransferase"/>
    <property type="match status" value="1"/>
</dbReference>
<dbReference type="FunFam" id="3.40.50.11350:FF:000001">
    <property type="entry name" value="Alpha-(1,6)-fucosyltransferase"/>
    <property type="match status" value="1"/>
</dbReference>
<dbReference type="Gene3D" id="3.40.50.11350">
    <property type="match status" value="1"/>
</dbReference>
<dbReference type="Gene3D" id="1.10.287.1060">
    <property type="entry name" value="ESAT-6-like"/>
    <property type="match status" value="1"/>
</dbReference>
<dbReference type="Gene3D" id="2.30.30.40">
    <property type="entry name" value="SH3 Domains"/>
    <property type="match status" value="1"/>
</dbReference>
<dbReference type="InterPro" id="IPR015827">
    <property type="entry name" value="Fut8"/>
</dbReference>
<dbReference type="InterPro" id="IPR045573">
    <property type="entry name" value="Fut8_N_cat"/>
</dbReference>
<dbReference type="InterPro" id="IPR035653">
    <property type="entry name" value="Fut8_SH3"/>
</dbReference>
<dbReference type="InterPro" id="IPR027350">
    <property type="entry name" value="GT23_dom"/>
</dbReference>
<dbReference type="InterPro" id="IPR036028">
    <property type="entry name" value="SH3-like_dom_sf"/>
</dbReference>
<dbReference type="InterPro" id="IPR001452">
    <property type="entry name" value="SH3_domain"/>
</dbReference>
<dbReference type="PANTHER" id="PTHR13132">
    <property type="entry name" value="ALPHA- 1,6 -FUCOSYLTRANSFERASE"/>
    <property type="match status" value="1"/>
</dbReference>
<dbReference type="PANTHER" id="PTHR13132:SF29">
    <property type="entry name" value="ALPHA-(1,6)-FUCOSYLTRANSFERASE"/>
    <property type="match status" value="1"/>
</dbReference>
<dbReference type="Pfam" id="PF19745">
    <property type="entry name" value="FUT8_N_cat"/>
    <property type="match status" value="1"/>
</dbReference>
<dbReference type="Pfam" id="PF14604">
    <property type="entry name" value="SH3_9"/>
    <property type="match status" value="1"/>
</dbReference>
<dbReference type="PIRSF" id="PIRSF000472">
    <property type="entry name" value="Alpha1_6FUT_euk"/>
    <property type="match status" value="1"/>
</dbReference>
<dbReference type="SMART" id="SM00326">
    <property type="entry name" value="SH3"/>
    <property type="match status" value="1"/>
</dbReference>
<dbReference type="SUPFAM" id="SSF50044">
    <property type="entry name" value="SH3-domain"/>
    <property type="match status" value="1"/>
</dbReference>
<dbReference type="PROSITE" id="PS51659">
    <property type="entry name" value="GT23"/>
    <property type="match status" value="1"/>
</dbReference>
<dbReference type="PROSITE" id="PS50002">
    <property type="entry name" value="SH3"/>
    <property type="match status" value="1"/>
</dbReference>
<protein>
    <recommendedName>
        <fullName>Alpha-(1,6)-fucosyltransferase</fullName>
        <shortName>Alpha1-6FucT</shortName>
        <ecNumber>2.4.1.68</ecNumber>
    </recommendedName>
    <alternativeName>
        <fullName>GDP-L-Fuc:N-acetyl-beta-D-glucosaminide alpha1,6-fucosyltransferase</fullName>
    </alternativeName>
    <alternativeName>
        <fullName>GDP-fucose--glycoprotein fucosyltransferase</fullName>
    </alternativeName>
    <alternativeName>
        <fullName>Glycoprotein 6-alpha-L-fucosyltransferase</fullName>
    </alternativeName>
</protein>
<name>FUT8_RAT</name>
<gene>
    <name type="primary">Fut8</name>
</gene>
<evidence type="ECO:0000250" key="1"/>
<evidence type="ECO:0000250" key="2">
    <source>
        <dbReference type="UniProtKB" id="Q9BYC5"/>
    </source>
</evidence>
<evidence type="ECO:0000250" key="3">
    <source>
        <dbReference type="UniProtKB" id="Q9WTS2"/>
    </source>
</evidence>
<evidence type="ECO:0000255" key="4"/>
<evidence type="ECO:0000255" key="5">
    <source>
        <dbReference type="PROSITE-ProRule" id="PRU00192"/>
    </source>
</evidence>
<evidence type="ECO:0000255" key="6">
    <source>
        <dbReference type="PROSITE-ProRule" id="PRU00992"/>
    </source>
</evidence>
<keyword id="KW-1015">Disulfide bond</keyword>
<keyword id="KW-0328">Glycosyltransferase</keyword>
<keyword id="KW-0333">Golgi apparatus</keyword>
<keyword id="KW-0472">Membrane</keyword>
<keyword id="KW-0597">Phosphoprotein</keyword>
<keyword id="KW-1185">Reference proteome</keyword>
<keyword id="KW-0728">SH3 domain</keyword>
<keyword id="KW-0729">SH3-binding</keyword>
<keyword id="KW-0735">Signal-anchor</keyword>
<keyword id="KW-0808">Transferase</keyword>
<keyword id="KW-0812">Transmembrane</keyword>
<keyword id="KW-1133">Transmembrane helix</keyword>
<feature type="chain" id="PRO_0000357042" description="Alpha-(1,6)-fucosyltransferase">
    <location>
        <begin position="1"/>
        <end position="575"/>
    </location>
</feature>
<feature type="topological domain" description="Cytoplasmic" evidence="4">
    <location>
        <begin position="1"/>
        <end position="9"/>
    </location>
</feature>
<feature type="transmembrane region" description="Helical; Signal-anchor for type II membrane protein" evidence="4">
    <location>
        <begin position="10"/>
        <end position="30"/>
    </location>
</feature>
<feature type="topological domain" description="Lumenal" evidence="4">
    <location>
        <begin position="31"/>
        <end position="575"/>
    </location>
</feature>
<feature type="domain" description="GT23" evidence="6">
    <location>
        <begin position="206"/>
        <end position="493"/>
    </location>
</feature>
<feature type="domain" description="SH3" evidence="5">
    <location>
        <begin position="502"/>
        <end position="563"/>
    </location>
</feature>
<feature type="region of interest" description="Important for donor substrate binding">
    <location>
        <begin position="365"/>
        <end position="366"/>
    </location>
</feature>
<feature type="short sequence motif" description="SH3-binding" evidence="4">
    <location>
        <begin position="299"/>
        <end position="305"/>
    </location>
</feature>
<feature type="modified residue" description="Phosphoserine" evidence="3">
    <location>
        <position position="278"/>
    </location>
</feature>
<feature type="disulfide bond" evidence="1">
    <location>
        <begin position="204"/>
        <end position="266"/>
    </location>
</feature>
<feature type="disulfide bond" evidence="1">
    <location>
        <begin position="212"/>
        <end position="230"/>
    </location>
</feature>
<feature type="disulfide bond" evidence="1">
    <location>
        <begin position="218"/>
        <end position="222"/>
    </location>
</feature>
<feature type="disulfide bond" evidence="1">
    <location>
        <begin position="465"/>
        <end position="472"/>
    </location>
</feature>
<accession>Q6EV76</accession>
<sequence length="575" mass="66485">MRAWTGSWRWIMLILFAWGTLLFYIGGHLVRDNDHPDHSSRELSKILAKLERLKQQNEDLRRMAESLRIPEGPIDQGTATGRVRVLEEQLVKAKEQIENYKKQARNGLGKDHELLRRRIENGAKELWFFLQSELKKLKHLEGNELQRHADEILLDLGHHERSIMTDLYYLSQTDGAGDWREKEAKDLTELVQRRITYLQNPKDCSKARKLVCNINKGCGYGCQLHHVVYCFMIAYGTQRTLILESQNWRYATGGWETVFRPVSETCTDRSGLSTGHWSGEVNDKNIQVVELPIVDSLHPRPPYLPLAVPEDLADRLVRVHGDPAVWWVSQFVKYLIRPQPWLEKEIEEATKKLGFKHPVIGVHVRRTDKVGTEAAFHPIEEYMVHVEEHFQLLARRMQVDKKRVYLATDDPALLKEAKTKYSNYEFISDNSISWSAGLHNRYTENSLRGVILDIHFLSQADFLVCTFSSQVCRVAYEIMQTLHPDASANFHSLDDIYYFGGQNAHNQIAVYPHKPRTDEEIPMEPGDIIGVAGNHWDGYSKGVNRKLGKTGLYPSYKVREKIETVKYPTYPEAEK</sequence>